<geneLocation type="chloroplast"/>
<reference key="1">
    <citation type="submission" date="2003-06" db="EMBL/GenBank/DDBJ databases">
        <title>Cloning of LIPOR genes from Chlorella protothecoides CS-41 and their expression in E. coli BL21.</title>
        <authorList>
            <person name="Shi C."/>
            <person name="Shi X."/>
        </authorList>
    </citation>
    <scope>NUCLEOTIDE SEQUENCE [GENOMIC DNA]</scope>
    <source>
        <strain>CS-41</strain>
    </source>
</reference>
<accession>Q6VQA9</accession>
<dbReference type="EC" id="1.3.7.7" evidence="1"/>
<dbReference type="EMBL" id="AY331981">
    <property type="protein sequence ID" value="AAP93905.1"/>
    <property type="molecule type" value="Genomic_DNA"/>
</dbReference>
<dbReference type="SMR" id="Q6VQA9"/>
<dbReference type="BRENDA" id="1.3.7.7">
    <property type="organism ID" value="1329"/>
</dbReference>
<dbReference type="UniPathway" id="UPA00670"/>
<dbReference type="GO" id="GO:0009507">
    <property type="term" value="C:chloroplast"/>
    <property type="evidence" value="ECO:0007669"/>
    <property type="project" value="UniProtKB-SubCell"/>
</dbReference>
<dbReference type="GO" id="GO:0051539">
    <property type="term" value="F:4 iron, 4 sulfur cluster binding"/>
    <property type="evidence" value="ECO:0007669"/>
    <property type="project" value="UniProtKB-UniRule"/>
</dbReference>
<dbReference type="GO" id="GO:0005524">
    <property type="term" value="F:ATP binding"/>
    <property type="evidence" value="ECO:0007669"/>
    <property type="project" value="UniProtKB-UniRule"/>
</dbReference>
<dbReference type="GO" id="GO:0046872">
    <property type="term" value="F:metal ion binding"/>
    <property type="evidence" value="ECO:0007669"/>
    <property type="project" value="UniProtKB-KW"/>
</dbReference>
<dbReference type="GO" id="GO:0016730">
    <property type="term" value="F:oxidoreductase activity, acting on iron-sulfur proteins as donors"/>
    <property type="evidence" value="ECO:0007669"/>
    <property type="project" value="InterPro"/>
</dbReference>
<dbReference type="GO" id="GO:0016636">
    <property type="term" value="F:oxidoreductase activity, acting on the CH-CH group of donors, iron-sulfur protein as acceptor"/>
    <property type="evidence" value="ECO:0007669"/>
    <property type="project" value="UniProtKB-UniRule"/>
</dbReference>
<dbReference type="GO" id="GO:0036068">
    <property type="term" value="P:light-independent chlorophyll biosynthetic process"/>
    <property type="evidence" value="ECO:0007669"/>
    <property type="project" value="UniProtKB-UniRule"/>
</dbReference>
<dbReference type="GO" id="GO:0019685">
    <property type="term" value="P:photosynthesis, dark reaction"/>
    <property type="evidence" value="ECO:0007669"/>
    <property type="project" value="InterPro"/>
</dbReference>
<dbReference type="CDD" id="cd02032">
    <property type="entry name" value="Bchl-like"/>
    <property type="match status" value="1"/>
</dbReference>
<dbReference type="Gene3D" id="3.40.50.300">
    <property type="entry name" value="P-loop containing nucleotide triphosphate hydrolases"/>
    <property type="match status" value="1"/>
</dbReference>
<dbReference type="HAMAP" id="MF_00355">
    <property type="entry name" value="ChlL_BchL"/>
    <property type="match status" value="1"/>
</dbReference>
<dbReference type="InterPro" id="IPR030655">
    <property type="entry name" value="NifH/chlL_CS"/>
</dbReference>
<dbReference type="InterPro" id="IPR000392">
    <property type="entry name" value="NifH/frxC"/>
</dbReference>
<dbReference type="InterPro" id="IPR027417">
    <property type="entry name" value="P-loop_NTPase"/>
</dbReference>
<dbReference type="InterPro" id="IPR005971">
    <property type="entry name" value="Protochlorophyllide_ATP-bd"/>
</dbReference>
<dbReference type="NCBIfam" id="TIGR01281">
    <property type="entry name" value="DPOR_bchL"/>
    <property type="match status" value="1"/>
</dbReference>
<dbReference type="PANTHER" id="PTHR42864">
    <property type="entry name" value="LIGHT-INDEPENDENT PROTOCHLOROPHYLLIDE REDUCTASE IRON-SULFUR ATP-BINDING PROTEIN"/>
    <property type="match status" value="1"/>
</dbReference>
<dbReference type="PANTHER" id="PTHR42864:SF2">
    <property type="entry name" value="LIGHT-INDEPENDENT PROTOCHLOROPHYLLIDE REDUCTASE IRON-SULFUR ATP-BINDING PROTEIN"/>
    <property type="match status" value="1"/>
</dbReference>
<dbReference type="Pfam" id="PF00142">
    <property type="entry name" value="Fer4_NifH"/>
    <property type="match status" value="1"/>
</dbReference>
<dbReference type="PIRSF" id="PIRSF000363">
    <property type="entry name" value="Nitrogenase_iron"/>
    <property type="match status" value="1"/>
</dbReference>
<dbReference type="PRINTS" id="PR00091">
    <property type="entry name" value="NITROGNASEII"/>
</dbReference>
<dbReference type="SUPFAM" id="SSF52540">
    <property type="entry name" value="P-loop containing nucleoside triphosphate hydrolases"/>
    <property type="match status" value="1"/>
</dbReference>
<dbReference type="PROSITE" id="PS00746">
    <property type="entry name" value="NIFH_FRXC_1"/>
    <property type="match status" value="1"/>
</dbReference>
<dbReference type="PROSITE" id="PS00692">
    <property type="entry name" value="NIFH_FRXC_2"/>
    <property type="match status" value="1"/>
</dbReference>
<dbReference type="PROSITE" id="PS51026">
    <property type="entry name" value="NIFH_FRXC_3"/>
    <property type="match status" value="1"/>
</dbReference>
<comment type="function">
    <text evidence="1">Component of the dark-operative protochlorophyllide reductase (DPOR) that uses Mg-ATP and reduced ferredoxin to reduce ring D of protochlorophyllide (Pchlide) to form chlorophyllide a (Chlide). This reaction is light-independent. The L component serves as a unique electron donor to the NB-component of the complex, and binds Mg-ATP.</text>
</comment>
<comment type="catalytic activity">
    <reaction evidence="1">
        <text>chlorophyllide a + oxidized 2[4Fe-4S]-[ferredoxin] + 2 ADP + 2 phosphate = protochlorophyllide a + reduced 2[4Fe-4S]-[ferredoxin] + 2 ATP + 2 H2O</text>
        <dbReference type="Rhea" id="RHEA:28202"/>
        <dbReference type="Rhea" id="RHEA-COMP:10002"/>
        <dbReference type="Rhea" id="RHEA-COMP:10004"/>
        <dbReference type="ChEBI" id="CHEBI:15377"/>
        <dbReference type="ChEBI" id="CHEBI:30616"/>
        <dbReference type="ChEBI" id="CHEBI:33722"/>
        <dbReference type="ChEBI" id="CHEBI:33723"/>
        <dbReference type="ChEBI" id="CHEBI:43474"/>
        <dbReference type="ChEBI" id="CHEBI:83348"/>
        <dbReference type="ChEBI" id="CHEBI:83350"/>
        <dbReference type="ChEBI" id="CHEBI:456216"/>
        <dbReference type="EC" id="1.3.7.7"/>
    </reaction>
</comment>
<comment type="cofactor">
    <cofactor evidence="1">
        <name>[4Fe-4S] cluster</name>
        <dbReference type="ChEBI" id="CHEBI:49883"/>
    </cofactor>
    <text evidence="1">Binds 1 [4Fe-4S] cluster per dimer.</text>
</comment>
<comment type="pathway">
    <text evidence="1">Porphyrin-containing compound metabolism; chlorophyll biosynthesis (light-independent).</text>
</comment>
<comment type="subunit">
    <text evidence="1">Homodimer. Protochlorophyllide reductase is composed of three subunits; ChlL, ChlN and ChlB.</text>
</comment>
<comment type="subcellular location">
    <subcellularLocation>
        <location>Plastid</location>
        <location>Chloroplast</location>
    </subcellularLocation>
</comment>
<comment type="similarity">
    <text evidence="1">Belongs to the NifH/BchL/ChlL family.</text>
</comment>
<proteinExistence type="inferred from homology"/>
<organism>
    <name type="scientific">Auxenochlorella protothecoides</name>
    <name type="common">Green microalga</name>
    <name type="synonym">Chlorella protothecoides</name>
    <dbReference type="NCBI Taxonomy" id="3075"/>
    <lineage>
        <taxon>Eukaryota</taxon>
        <taxon>Viridiplantae</taxon>
        <taxon>Chlorophyta</taxon>
        <taxon>core chlorophytes</taxon>
        <taxon>Trebouxiophyceae</taxon>
        <taxon>Chlorellales</taxon>
        <taxon>Chlorellaceae</taxon>
        <taxon>Auxenochlorella</taxon>
    </lineage>
</organism>
<evidence type="ECO:0000255" key="1">
    <source>
        <dbReference type="HAMAP-Rule" id="MF_00355"/>
    </source>
</evidence>
<keyword id="KW-0004">4Fe-4S</keyword>
<keyword id="KW-0067">ATP-binding</keyword>
<keyword id="KW-0149">Chlorophyll biosynthesis</keyword>
<keyword id="KW-0150">Chloroplast</keyword>
<keyword id="KW-0408">Iron</keyword>
<keyword id="KW-0411">Iron-sulfur</keyword>
<keyword id="KW-0460">Magnesium</keyword>
<keyword id="KW-0479">Metal-binding</keyword>
<keyword id="KW-0547">Nucleotide-binding</keyword>
<keyword id="KW-0560">Oxidoreductase</keyword>
<keyword id="KW-0602">Photosynthesis</keyword>
<keyword id="KW-0934">Plastid</keyword>
<name>CHLL_AUXPR</name>
<protein>
    <recommendedName>
        <fullName evidence="1">Light-independent protochlorophyllide reductase iron-sulfur ATP-binding protein</fullName>
        <shortName evidence="1">DPOR subunit L</shortName>
        <shortName evidence="1">LI-POR subunit L</shortName>
        <ecNumber evidence="1">1.3.7.7</ecNumber>
    </recommendedName>
</protein>
<gene>
    <name evidence="1" type="primary">chlL</name>
</gene>
<sequence>MKLAVYGKGGIGKSTTSCNISIALARRGKKVLQIGCDPKHDSTFTLTGFLIPTIIDTLQAKDYHYEDVWPEDVIYQGYGEVDSVEAGGPPAGAGCGGYVVGETVKLLKELNAFYEYDVILFDVLGDVVCGGFAAPLNYADYCLIVTDNGFDALFAANRIVASVREKSKTHPLRLAGLIGNRTSKRDLIDKYVEVCPMPVIEVLPLIEDIRVSRVKGKTVFEMAETDQKLNYICDFYLNIADQLLASPEGVIPLELEDRELFTLLSTFYLTVTPQNQGETQSTISTPLTSNSASELDFILV</sequence>
<feature type="chain" id="PRO_0000139553" description="Light-independent protochlorophyllide reductase iron-sulfur ATP-binding protein">
    <location>
        <begin position="1"/>
        <end position="300"/>
    </location>
</feature>
<feature type="binding site" evidence="1">
    <location>
        <begin position="10"/>
        <end position="15"/>
    </location>
    <ligand>
        <name>ATP</name>
        <dbReference type="ChEBI" id="CHEBI:30616"/>
    </ligand>
</feature>
<feature type="binding site" evidence="1">
    <location>
        <position position="14"/>
    </location>
    <ligand>
        <name>Mg(2+)</name>
        <dbReference type="ChEBI" id="CHEBI:18420"/>
    </ligand>
</feature>
<feature type="binding site" evidence="1">
    <location>
        <position position="39"/>
    </location>
    <ligand>
        <name>ATP</name>
        <dbReference type="ChEBI" id="CHEBI:30616"/>
    </ligand>
</feature>
<feature type="binding site" evidence="1">
    <location>
        <position position="95"/>
    </location>
    <ligand>
        <name>[4Fe-4S] cluster</name>
        <dbReference type="ChEBI" id="CHEBI:49883"/>
        <note>ligand shared between dimeric partners</note>
    </ligand>
</feature>
<feature type="binding site" evidence="1">
    <location>
        <position position="129"/>
    </location>
    <ligand>
        <name>[4Fe-4S] cluster</name>
        <dbReference type="ChEBI" id="CHEBI:49883"/>
        <note>ligand shared between dimeric partners</note>
    </ligand>
</feature>
<feature type="binding site" evidence="1">
    <location>
        <begin position="180"/>
        <end position="181"/>
    </location>
    <ligand>
        <name>ATP</name>
        <dbReference type="ChEBI" id="CHEBI:30616"/>
    </ligand>
</feature>